<gene>
    <name type="primary">Sprr2g</name>
</gene>
<name>SPR2G_MOUSE</name>
<reference key="1">
    <citation type="journal article" date="1999" name="Genomics">
        <title>Mouse Sprr2 genes: a clustered family of genes showing differential expression in epithelial tissues.</title>
        <authorList>
            <person name="Song H.J."/>
            <person name="Poy G."/>
            <person name="Darwiche N."/>
            <person name="Lichti U."/>
            <person name="Kuroki T."/>
            <person name="Steinert P.M."/>
            <person name="Kartasova T."/>
        </authorList>
    </citation>
    <scope>NUCLEOTIDE SEQUENCE [GENOMIC DNA]</scope>
    <source>
        <strain>BALB/cJ</strain>
    </source>
</reference>
<reference key="2">
    <citation type="journal article" date="2003" name="Mamm. Genome">
        <title>Mouse Sprr locus: a tandem array of coordinately regulated genes.</title>
        <authorList>
            <person name="Patel S."/>
            <person name="Kartasova T."/>
            <person name="Segre J.A."/>
        </authorList>
    </citation>
    <scope>NUCLEOTIDE SEQUENCE [MRNA]</scope>
    <source>
        <strain>C57BL/6J</strain>
    </source>
</reference>
<reference key="3">
    <citation type="journal article" date="2004" name="Mol. Cells">
        <title>Estrogen regulates the expression of the small proline-rich 2 gene family in the mouse uterus.</title>
        <authorList>
            <person name="Hong S.H."/>
            <person name="Nah H.Y."/>
            <person name="Lee J.Y."/>
            <person name="Lee Y.J."/>
            <person name="Lee J.W."/>
            <person name="Gye M.C."/>
            <person name="Kim C.H."/>
            <person name="Kang B.M."/>
            <person name="Kim M.K."/>
        </authorList>
    </citation>
    <scope>TISSUE SPECIFICITY</scope>
    <scope>DEVELOPMENTAL STAGE</scope>
    <scope>INDUCTION</scope>
</reference>
<proteinExistence type="evidence at transcript level"/>
<sequence>MSFQEQQCKQPCQPPPVCPPPKCPEPCPLPKCPEPCPPPKCPEPCPEPCLPSPCQQKCPPVQTPPPCQQKCPPKSK</sequence>
<comment type="function">
    <text evidence="1">Cross-linked envelope protein of keratinocytes. It is a keratinocyte protein that first appears in the cell cytosol, but ultimately becomes cross-linked to membrane proteins by transglutaminase. All that results in the formation of an insoluble envelope beneath the plasma membrane (By similarity).</text>
</comment>
<comment type="subcellular location">
    <subcellularLocation>
        <location evidence="1">Cytoplasm</location>
    </subcellularLocation>
</comment>
<comment type="tissue specificity">
    <text evidence="3">Expressed in uterus.</text>
</comment>
<comment type="developmental stage">
    <text evidence="3">During early pregnancy, moderate uterine expression is detected from 1 dpc to 5 dpc, with levels decreasing at 6 dpc.</text>
</comment>
<comment type="induction">
    <text evidence="3">Up-regulated by estrogen in the uterus of ovariectomized animals, with strongly increased expression detected in luminal epithelial cells at 6 and 12 hours after hormone injection.</text>
</comment>
<comment type="similarity">
    <text evidence="4">Belongs to the cornifin (SPRR) family.</text>
</comment>
<organism>
    <name type="scientific">Mus musculus</name>
    <name type="common">Mouse</name>
    <dbReference type="NCBI Taxonomy" id="10090"/>
    <lineage>
        <taxon>Eukaryota</taxon>
        <taxon>Metazoa</taxon>
        <taxon>Chordata</taxon>
        <taxon>Craniata</taxon>
        <taxon>Vertebrata</taxon>
        <taxon>Euteleostomi</taxon>
        <taxon>Mammalia</taxon>
        <taxon>Eutheria</taxon>
        <taxon>Euarchontoglires</taxon>
        <taxon>Glires</taxon>
        <taxon>Rodentia</taxon>
        <taxon>Myomorpha</taxon>
        <taxon>Muroidea</taxon>
        <taxon>Muridae</taxon>
        <taxon>Murinae</taxon>
        <taxon>Mus</taxon>
        <taxon>Mus</taxon>
    </lineage>
</organism>
<evidence type="ECO:0000250" key="1"/>
<evidence type="ECO:0000256" key="2">
    <source>
        <dbReference type="SAM" id="MobiDB-lite"/>
    </source>
</evidence>
<evidence type="ECO:0000269" key="3">
    <source>
    </source>
</evidence>
<evidence type="ECO:0000305" key="4"/>
<dbReference type="EMBL" id="AJ005565">
    <property type="protein sequence ID" value="CAA06594.1"/>
    <property type="molecule type" value="Genomic_DNA"/>
</dbReference>
<dbReference type="EMBL" id="AY158991">
    <property type="protein sequence ID" value="AAN86828.1"/>
    <property type="molecule type" value="mRNA"/>
</dbReference>
<dbReference type="RefSeq" id="NP_001416553.1">
    <property type="nucleotide sequence ID" value="NM_001429624.2"/>
</dbReference>
<dbReference type="ProteomicsDB" id="254533"/>
<dbReference type="Pumba" id="O70558"/>
<dbReference type="GeneID" id="20761"/>
<dbReference type="AGR" id="MGI:1330348"/>
<dbReference type="MGI" id="MGI:1330348">
    <property type="gene designation" value="Sprr2g"/>
</dbReference>
<dbReference type="VEuPathDB" id="HostDB:ENSMUSG00000046203"/>
<dbReference type="HOGENOM" id="CLU_192372_0_0_1"/>
<dbReference type="InParanoid" id="O70558"/>
<dbReference type="OMA" id="CYEPCIA"/>
<dbReference type="PRO" id="PR:O70558"/>
<dbReference type="Proteomes" id="UP000000589">
    <property type="component" value="Chromosome 3"/>
</dbReference>
<dbReference type="RNAct" id="O70558">
    <property type="molecule type" value="protein"/>
</dbReference>
<dbReference type="Bgee" id="ENSMUSG00000046203">
    <property type="expression patterns" value="Expressed in umbilical cord and 63 other cell types or tissues"/>
</dbReference>
<dbReference type="GO" id="GO:0001533">
    <property type="term" value="C:cornified envelope"/>
    <property type="evidence" value="ECO:0000303"/>
    <property type="project" value="UniProtKB"/>
</dbReference>
<dbReference type="GO" id="GO:0005737">
    <property type="term" value="C:cytoplasm"/>
    <property type="evidence" value="ECO:0000314"/>
    <property type="project" value="UniProtKB"/>
</dbReference>
<dbReference type="GO" id="GO:0005634">
    <property type="term" value="C:nucleus"/>
    <property type="evidence" value="ECO:0000314"/>
    <property type="project" value="UniProtKB"/>
</dbReference>
<dbReference type="GO" id="GO:0008544">
    <property type="term" value="P:epidermis development"/>
    <property type="evidence" value="ECO:0000303"/>
    <property type="project" value="UniProtKB"/>
</dbReference>
<dbReference type="GO" id="GO:0031424">
    <property type="term" value="P:keratinization"/>
    <property type="evidence" value="ECO:0007669"/>
    <property type="project" value="UniProtKB-KW"/>
</dbReference>
<dbReference type="GO" id="GO:0030216">
    <property type="term" value="P:keratinocyte differentiation"/>
    <property type="evidence" value="ECO:0000303"/>
    <property type="project" value="UniProtKB"/>
</dbReference>
<dbReference type="GO" id="GO:0032355">
    <property type="term" value="P:response to estradiol"/>
    <property type="evidence" value="ECO:0000314"/>
    <property type="project" value="MGI"/>
</dbReference>
<dbReference type="InterPro" id="IPR029142">
    <property type="entry name" value="SPRR2"/>
</dbReference>
<dbReference type="Pfam" id="PF14820">
    <property type="entry name" value="SPRR2"/>
    <property type="match status" value="1"/>
</dbReference>
<dbReference type="PRINTS" id="PR00021">
    <property type="entry name" value="PRORICH"/>
</dbReference>
<protein>
    <recommendedName>
        <fullName>Small proline-rich protein 2G</fullName>
    </recommendedName>
</protein>
<keyword id="KW-0963">Cytoplasm</keyword>
<keyword id="KW-0417">Keratinization</keyword>
<keyword id="KW-1185">Reference proteome</keyword>
<keyword id="KW-0677">Repeat</keyword>
<accession>O70558</accession>
<feature type="chain" id="PRO_0000150019" description="Small proline-rich protein 2G">
    <location>
        <begin position="1"/>
        <end position="76"/>
    </location>
</feature>
<feature type="repeat" description="1">
    <location>
        <begin position="21"/>
        <end position="29"/>
    </location>
</feature>
<feature type="repeat" description="2">
    <location>
        <begin position="30"/>
        <end position="38"/>
    </location>
</feature>
<feature type="repeat" description="3">
    <location>
        <begin position="39"/>
        <end position="47"/>
    </location>
</feature>
<feature type="region of interest" description="3 X 9 AA approximate tandem repeats">
    <location>
        <begin position="21"/>
        <end position="47"/>
    </location>
</feature>
<feature type="region of interest" description="Disordered" evidence="2">
    <location>
        <begin position="55"/>
        <end position="76"/>
    </location>
</feature>